<proteinExistence type="evidence at protein level"/>
<accession>Q86WZ6</accession>
<accession>B3KRU7</accession>
<accession>B7Z5P9</accession>
<keyword id="KW-0025">Alternative splicing</keyword>
<keyword id="KW-0238">DNA-binding</keyword>
<keyword id="KW-0479">Metal-binding</keyword>
<keyword id="KW-0539">Nucleus</keyword>
<keyword id="KW-1267">Proteomics identification</keyword>
<keyword id="KW-1185">Reference proteome</keyword>
<keyword id="KW-0677">Repeat</keyword>
<keyword id="KW-0804">Transcription</keyword>
<keyword id="KW-0805">Transcription regulation</keyword>
<keyword id="KW-0862">Zinc</keyword>
<keyword id="KW-0863">Zinc-finger</keyword>
<organism>
    <name type="scientific">Homo sapiens</name>
    <name type="common">Human</name>
    <dbReference type="NCBI Taxonomy" id="9606"/>
    <lineage>
        <taxon>Eukaryota</taxon>
        <taxon>Metazoa</taxon>
        <taxon>Chordata</taxon>
        <taxon>Craniata</taxon>
        <taxon>Vertebrata</taxon>
        <taxon>Euteleostomi</taxon>
        <taxon>Mammalia</taxon>
        <taxon>Eutheria</taxon>
        <taxon>Euarchontoglires</taxon>
        <taxon>Primates</taxon>
        <taxon>Haplorrhini</taxon>
        <taxon>Catarrhini</taxon>
        <taxon>Hominidae</taxon>
        <taxon>Homo</taxon>
    </lineage>
</organism>
<sequence length="799" mass="92033">MPSQNYDLPQKKQEKMTKFQEAVTFKDVAVVFSREELRLLDLTQRKLYRDVMVENFKNLVAVGHLPFQPDMVSQLEAEEKLWMMETETQRSSKHQNKMETLQKFALKYLSNQELSCWQIWKQVASELTRCLQGKSSQLLQGDSIQVSENENNIMNPKGDSSIYIENQEFPFWRTQHSCGNTYLSESQIQSRGKQIDVKNNLQIHEDFMKKSPFHEHIKTDTEPKPCKGNEYGKIISDGSNQKLPLGEKPHPCGECGRGFSYSPRLPLHPNVHTGEKCFSQSSHLRTHQRIHPGEKLNRCHESGDCFNKSSFHSYQSNHTGEKSYRCDSCGKGFSSSTGLIIHYRTHTGEKPYKCEECGKCFSQSSNFQCHQRVHTEEKPYKCEECGKGFGWSVNLRVHQRVHRGEKPYKCEECGKGFTQAAHFHIHQRVHTGEKPYKCDVCGKGFSHNSPLICHRRVHTGEKPYKCEACGKGFTRNTDLHIHFRVHTGEKPYKCKECGKGFSQASNLQVHQNVHTGEKRFKCETCGKGFSQSSKLQTHQRVHTGEKPYRCDVCGKDFSYSSNLKLHQVIHTGEKPYKCEECGKGFSWRSNLHAHQRVHSGEKPYKCEQCDKSFSQAIDFRVHQRVHTGEKPYKCGVCGKGFSQSSGLQSHQRVHTGEKPYKCDVCGKGFRYSSQFIYHQRGHTGEKPYKCEECGKGFGRSLNLRHHQRVHTGEKPHICEECGKAFSLPSNLRVHLGVHTREKLFKCEECGKGFSQSARLEAHQRVHTGEKPYKCDICDKDFRHRSRLTYHQKVHTGKKL</sequence>
<dbReference type="EMBL" id="AK092253">
    <property type="protein sequence ID" value="BAG52509.1"/>
    <property type="molecule type" value="mRNA"/>
</dbReference>
<dbReference type="EMBL" id="AK299266">
    <property type="protein sequence ID" value="BAH12985.1"/>
    <property type="molecule type" value="mRNA"/>
</dbReference>
<dbReference type="EMBL" id="AK316048">
    <property type="protein sequence ID" value="BAH14419.1"/>
    <property type="molecule type" value="mRNA"/>
</dbReference>
<dbReference type="EMBL" id="AC138470">
    <property type="status" value="NOT_ANNOTATED_CDS"/>
    <property type="molecule type" value="Genomic_DNA"/>
</dbReference>
<dbReference type="EMBL" id="CH471126">
    <property type="protein sequence ID" value="EAW57261.1"/>
    <property type="molecule type" value="Genomic_DNA"/>
</dbReference>
<dbReference type="EMBL" id="BC047570">
    <property type="protein sequence ID" value="AAH47570.1"/>
    <property type="molecule type" value="mRNA"/>
</dbReference>
<dbReference type="CCDS" id="CCDS12636.1">
    <molecule id="Q86WZ6-1"/>
</dbReference>
<dbReference type="CCDS" id="CCDS74388.1">
    <molecule id="Q86WZ6-2"/>
</dbReference>
<dbReference type="RefSeq" id="NP_001276095.1">
    <molecule id="Q86WZ6-1"/>
    <property type="nucleotide sequence ID" value="NM_001289166.2"/>
</dbReference>
<dbReference type="RefSeq" id="NP_001276096.1">
    <molecule id="Q86WZ6-2"/>
    <property type="nucleotide sequence ID" value="NM_001289167.2"/>
</dbReference>
<dbReference type="RefSeq" id="NP_001276097.1">
    <molecule id="Q86WZ6-2"/>
    <property type="nucleotide sequence ID" value="NM_001289168.2"/>
</dbReference>
<dbReference type="RefSeq" id="NP_001276098.1">
    <molecule id="Q86WZ6-2"/>
    <property type="nucleotide sequence ID" value="NM_001289169.2"/>
</dbReference>
<dbReference type="RefSeq" id="NP_001276099.1">
    <property type="nucleotide sequence ID" value="NM_001289170.1"/>
</dbReference>
<dbReference type="RefSeq" id="NP_872296.1">
    <molecule id="Q86WZ6-1"/>
    <property type="nucleotide sequence ID" value="NM_182490.3"/>
</dbReference>
<dbReference type="RefSeq" id="XP_005259289.1">
    <molecule id="Q86WZ6-1"/>
    <property type="nucleotide sequence ID" value="XM_005259232.4"/>
</dbReference>
<dbReference type="RefSeq" id="XP_011525591.1">
    <molecule id="Q86WZ6-1"/>
    <property type="nucleotide sequence ID" value="XM_011527289.3"/>
</dbReference>
<dbReference type="RefSeq" id="XP_016882755.1">
    <molecule id="Q86WZ6-1"/>
    <property type="nucleotide sequence ID" value="XM_017027266.2"/>
</dbReference>
<dbReference type="RefSeq" id="XP_016882757.1">
    <property type="nucleotide sequence ID" value="XM_017027268.1"/>
</dbReference>
<dbReference type="RefSeq" id="XP_016882758.1">
    <property type="nucleotide sequence ID" value="XM_017027269.1"/>
</dbReference>
<dbReference type="RefSeq" id="XP_016882759.1">
    <property type="nucleotide sequence ID" value="XM_017027270.1"/>
</dbReference>
<dbReference type="RefSeq" id="XP_016882760.1">
    <property type="nucleotide sequence ID" value="XM_017027271.1"/>
</dbReference>
<dbReference type="RefSeq" id="XP_047295333.1">
    <molecule id="Q86WZ6-1"/>
    <property type="nucleotide sequence ID" value="XM_047439377.1"/>
</dbReference>
<dbReference type="RefSeq" id="XP_054178011.1">
    <molecule id="Q86WZ6-1"/>
    <property type="nucleotide sequence ID" value="XM_054322036.1"/>
</dbReference>
<dbReference type="RefSeq" id="XP_054178012.1">
    <molecule id="Q86WZ6-1"/>
    <property type="nucleotide sequence ID" value="XM_054322037.1"/>
</dbReference>
<dbReference type="RefSeq" id="XP_054178013.1">
    <molecule id="Q86WZ6-1"/>
    <property type="nucleotide sequence ID" value="XM_054322038.1"/>
</dbReference>
<dbReference type="RefSeq" id="XP_054178014.1">
    <molecule id="Q86WZ6-1"/>
    <property type="nucleotide sequence ID" value="XM_054322039.1"/>
</dbReference>
<dbReference type="SMR" id="Q86WZ6"/>
<dbReference type="BioGRID" id="113553">
    <property type="interactions" value="76"/>
</dbReference>
<dbReference type="FunCoup" id="Q86WZ6">
    <property type="interactions" value="323"/>
</dbReference>
<dbReference type="IntAct" id="Q86WZ6">
    <property type="interactions" value="12"/>
</dbReference>
<dbReference type="MINT" id="Q86WZ6"/>
<dbReference type="STRING" id="9606.ENSP00000482749"/>
<dbReference type="iPTMnet" id="Q86WZ6"/>
<dbReference type="PhosphoSitePlus" id="Q86WZ6"/>
<dbReference type="BioMuta" id="ZNF227"/>
<dbReference type="DMDM" id="55976727"/>
<dbReference type="jPOST" id="Q86WZ6"/>
<dbReference type="MassIVE" id="Q86WZ6"/>
<dbReference type="PaxDb" id="9606-ENSP00000482749"/>
<dbReference type="PeptideAtlas" id="Q86WZ6"/>
<dbReference type="ProteomicsDB" id="6708"/>
<dbReference type="ProteomicsDB" id="70216">
    <molecule id="Q86WZ6-1"/>
</dbReference>
<dbReference type="Pumba" id="Q86WZ6"/>
<dbReference type="Antibodypedia" id="17695">
    <property type="antibodies" value="150 antibodies from 23 providers"/>
</dbReference>
<dbReference type="DNASU" id="7770"/>
<dbReference type="Ensembl" id="ENST00000313040.12">
    <molecule id="Q86WZ6-1"/>
    <property type="protein sequence ID" value="ENSP00000321049.6"/>
    <property type="gene ID" value="ENSG00000131115.16"/>
</dbReference>
<dbReference type="Ensembl" id="ENST00000391961.6">
    <molecule id="Q86WZ6-2"/>
    <property type="protein sequence ID" value="ENSP00000375823.2"/>
    <property type="gene ID" value="ENSG00000131115.16"/>
</dbReference>
<dbReference type="Ensembl" id="ENST00000589005.5">
    <molecule id="Q86WZ6-2"/>
    <property type="protein sequence ID" value="ENSP00000467577.1"/>
    <property type="gene ID" value="ENSG00000131115.16"/>
</dbReference>
<dbReference type="Ensembl" id="ENST00000621083.4">
    <molecule id="Q86WZ6-1"/>
    <property type="protein sequence ID" value="ENSP00000482749.1"/>
    <property type="gene ID" value="ENSG00000131115.16"/>
</dbReference>
<dbReference type="GeneID" id="7770"/>
<dbReference type="KEGG" id="hsa:7770"/>
<dbReference type="MANE-Select" id="ENST00000313040.12">
    <property type="protein sequence ID" value="ENSP00000321049.6"/>
    <property type="RefSeq nucleotide sequence ID" value="NM_182490.3"/>
    <property type="RefSeq protein sequence ID" value="NP_872296.1"/>
</dbReference>
<dbReference type="UCSC" id="uc002oyu.5">
    <molecule id="Q86WZ6-1"/>
    <property type="organism name" value="human"/>
</dbReference>
<dbReference type="AGR" id="HGNC:13020"/>
<dbReference type="CTD" id="7770"/>
<dbReference type="GeneCards" id="ZNF227"/>
<dbReference type="HGNC" id="HGNC:13020">
    <property type="gene designation" value="ZNF227"/>
</dbReference>
<dbReference type="HPA" id="ENSG00000131115">
    <property type="expression patterns" value="Low tissue specificity"/>
</dbReference>
<dbReference type="neXtProt" id="NX_Q86WZ6"/>
<dbReference type="OpenTargets" id="ENSG00000131115"/>
<dbReference type="PharmGKB" id="PA37599"/>
<dbReference type="VEuPathDB" id="HostDB:ENSG00000131115"/>
<dbReference type="eggNOG" id="KOG1721">
    <property type="taxonomic scope" value="Eukaryota"/>
</dbReference>
<dbReference type="GeneTree" id="ENSGT00940000162819"/>
<dbReference type="HOGENOM" id="CLU_002678_31_4_1"/>
<dbReference type="InParanoid" id="Q86WZ6"/>
<dbReference type="OMA" id="ICEDFMK"/>
<dbReference type="OrthoDB" id="9411774at2759"/>
<dbReference type="PAN-GO" id="Q86WZ6">
    <property type="GO annotations" value="4 GO annotations based on evolutionary models"/>
</dbReference>
<dbReference type="PhylomeDB" id="Q86WZ6"/>
<dbReference type="TreeFam" id="TF350845"/>
<dbReference type="PathwayCommons" id="Q86WZ6"/>
<dbReference type="Reactome" id="R-HSA-212436">
    <property type="pathway name" value="Generic Transcription Pathway"/>
</dbReference>
<dbReference type="SignaLink" id="Q86WZ6"/>
<dbReference type="BioGRID-ORCS" id="7770">
    <property type="hits" value="11 hits in 1175 CRISPR screens"/>
</dbReference>
<dbReference type="ChiTaRS" id="ZNF227">
    <property type="organism name" value="human"/>
</dbReference>
<dbReference type="GenomeRNAi" id="7770"/>
<dbReference type="Pharos" id="Q86WZ6">
    <property type="development level" value="Tdark"/>
</dbReference>
<dbReference type="PRO" id="PR:Q86WZ6"/>
<dbReference type="Proteomes" id="UP000005640">
    <property type="component" value="Chromosome 19"/>
</dbReference>
<dbReference type="RNAct" id="Q86WZ6">
    <property type="molecule type" value="protein"/>
</dbReference>
<dbReference type="Bgee" id="ENSG00000131115">
    <property type="expression patterns" value="Expressed in secondary oocyte and 172 other cell types or tissues"/>
</dbReference>
<dbReference type="ExpressionAtlas" id="Q86WZ6">
    <property type="expression patterns" value="baseline and differential"/>
</dbReference>
<dbReference type="GO" id="GO:0005634">
    <property type="term" value="C:nucleus"/>
    <property type="evidence" value="ECO:0000318"/>
    <property type="project" value="GO_Central"/>
</dbReference>
<dbReference type="GO" id="GO:0003677">
    <property type="term" value="F:DNA binding"/>
    <property type="evidence" value="ECO:0007669"/>
    <property type="project" value="UniProtKB-KW"/>
</dbReference>
<dbReference type="GO" id="GO:0008270">
    <property type="term" value="F:zinc ion binding"/>
    <property type="evidence" value="ECO:0007669"/>
    <property type="project" value="UniProtKB-KW"/>
</dbReference>
<dbReference type="GO" id="GO:0006357">
    <property type="term" value="P:regulation of transcription by RNA polymerase II"/>
    <property type="evidence" value="ECO:0000318"/>
    <property type="project" value="GO_Central"/>
</dbReference>
<dbReference type="CDD" id="cd07765">
    <property type="entry name" value="KRAB_A-box"/>
    <property type="match status" value="1"/>
</dbReference>
<dbReference type="FunFam" id="3.30.160.60:FF:000446">
    <property type="entry name" value="Zinc finger protein"/>
    <property type="match status" value="1"/>
</dbReference>
<dbReference type="FunFam" id="3.30.160.60:FF:000274">
    <property type="entry name" value="zinc finger protein 16"/>
    <property type="match status" value="3"/>
</dbReference>
<dbReference type="FunFam" id="3.30.160.60:FF:000725">
    <property type="entry name" value="zinc finger protein 205 isoform X1"/>
    <property type="match status" value="1"/>
</dbReference>
<dbReference type="FunFam" id="3.30.160.60:FF:001534">
    <property type="entry name" value="zinc finger protein 227 isoform X1"/>
    <property type="match status" value="4"/>
</dbReference>
<dbReference type="FunFam" id="3.30.160.60:FF:000623">
    <property type="entry name" value="Zinc finger protein 234"/>
    <property type="match status" value="1"/>
</dbReference>
<dbReference type="FunFam" id="3.30.160.60:FF:002343">
    <property type="entry name" value="Zinc finger protein 33A"/>
    <property type="match status" value="2"/>
</dbReference>
<dbReference type="FunFam" id="3.30.160.60:FF:000663">
    <property type="entry name" value="Zinc finger protein 45"/>
    <property type="match status" value="3"/>
</dbReference>
<dbReference type="FunFam" id="3.30.160.60:FF:002090">
    <property type="entry name" value="Zinc finger protein 473"/>
    <property type="match status" value="2"/>
</dbReference>
<dbReference type="FunFam" id="3.30.160.60:FF:002357">
    <property type="entry name" value="Zinc finger protein 782"/>
    <property type="match status" value="1"/>
</dbReference>
<dbReference type="Gene3D" id="6.10.140.140">
    <property type="match status" value="1"/>
</dbReference>
<dbReference type="Gene3D" id="3.30.160.60">
    <property type="entry name" value="Classic Zinc Finger"/>
    <property type="match status" value="19"/>
</dbReference>
<dbReference type="InterPro" id="IPR001909">
    <property type="entry name" value="KRAB"/>
</dbReference>
<dbReference type="InterPro" id="IPR036051">
    <property type="entry name" value="KRAB_dom_sf"/>
</dbReference>
<dbReference type="InterPro" id="IPR036236">
    <property type="entry name" value="Znf_C2H2_sf"/>
</dbReference>
<dbReference type="InterPro" id="IPR013087">
    <property type="entry name" value="Znf_C2H2_type"/>
</dbReference>
<dbReference type="PANTHER" id="PTHR24381:SF455">
    <property type="entry name" value="RB-ASSOCIATED KRAB ZINC FINGER PROTEIN-RELATED"/>
    <property type="match status" value="1"/>
</dbReference>
<dbReference type="PANTHER" id="PTHR24381">
    <property type="entry name" value="ZINC FINGER PROTEIN"/>
    <property type="match status" value="1"/>
</dbReference>
<dbReference type="Pfam" id="PF01352">
    <property type="entry name" value="KRAB"/>
    <property type="match status" value="1"/>
</dbReference>
<dbReference type="Pfam" id="PF00096">
    <property type="entry name" value="zf-C2H2"/>
    <property type="match status" value="17"/>
</dbReference>
<dbReference type="SMART" id="SM00349">
    <property type="entry name" value="KRAB"/>
    <property type="match status" value="1"/>
</dbReference>
<dbReference type="SMART" id="SM00355">
    <property type="entry name" value="ZnF_C2H2"/>
    <property type="match status" value="18"/>
</dbReference>
<dbReference type="SUPFAM" id="SSF57667">
    <property type="entry name" value="beta-beta-alpha zinc fingers"/>
    <property type="match status" value="11"/>
</dbReference>
<dbReference type="SUPFAM" id="SSF109640">
    <property type="entry name" value="KRAB domain (Kruppel-associated box)"/>
    <property type="match status" value="1"/>
</dbReference>
<dbReference type="PROSITE" id="PS50805">
    <property type="entry name" value="KRAB"/>
    <property type="match status" value="1"/>
</dbReference>
<dbReference type="PROSITE" id="PS00028">
    <property type="entry name" value="ZINC_FINGER_C2H2_1"/>
    <property type="match status" value="18"/>
</dbReference>
<dbReference type="PROSITE" id="PS50157">
    <property type="entry name" value="ZINC_FINGER_C2H2_2"/>
    <property type="match status" value="19"/>
</dbReference>
<gene>
    <name type="primary">ZNF227</name>
</gene>
<evidence type="ECO:0000255" key="1">
    <source>
        <dbReference type="PROSITE-ProRule" id="PRU00042"/>
    </source>
</evidence>
<evidence type="ECO:0000255" key="2">
    <source>
        <dbReference type="PROSITE-ProRule" id="PRU00119"/>
    </source>
</evidence>
<evidence type="ECO:0000303" key="3">
    <source>
    </source>
</evidence>
<evidence type="ECO:0000305" key="4"/>
<protein>
    <recommendedName>
        <fullName>Zinc finger protein 227</fullName>
    </recommendedName>
</protein>
<reference key="1">
    <citation type="journal article" date="2004" name="Nat. Genet.">
        <title>Complete sequencing and characterization of 21,243 full-length human cDNAs.</title>
        <authorList>
            <person name="Ota T."/>
            <person name="Suzuki Y."/>
            <person name="Nishikawa T."/>
            <person name="Otsuki T."/>
            <person name="Sugiyama T."/>
            <person name="Irie R."/>
            <person name="Wakamatsu A."/>
            <person name="Hayashi K."/>
            <person name="Sato H."/>
            <person name="Nagai K."/>
            <person name="Kimura K."/>
            <person name="Makita H."/>
            <person name="Sekine M."/>
            <person name="Obayashi M."/>
            <person name="Nishi T."/>
            <person name="Shibahara T."/>
            <person name="Tanaka T."/>
            <person name="Ishii S."/>
            <person name="Yamamoto J."/>
            <person name="Saito K."/>
            <person name="Kawai Y."/>
            <person name="Isono Y."/>
            <person name="Nakamura Y."/>
            <person name="Nagahari K."/>
            <person name="Murakami K."/>
            <person name="Yasuda T."/>
            <person name="Iwayanagi T."/>
            <person name="Wagatsuma M."/>
            <person name="Shiratori A."/>
            <person name="Sudo H."/>
            <person name="Hosoiri T."/>
            <person name="Kaku Y."/>
            <person name="Kodaira H."/>
            <person name="Kondo H."/>
            <person name="Sugawara M."/>
            <person name="Takahashi M."/>
            <person name="Kanda K."/>
            <person name="Yokoi T."/>
            <person name="Furuya T."/>
            <person name="Kikkawa E."/>
            <person name="Omura Y."/>
            <person name="Abe K."/>
            <person name="Kamihara K."/>
            <person name="Katsuta N."/>
            <person name="Sato K."/>
            <person name="Tanikawa M."/>
            <person name="Yamazaki M."/>
            <person name="Ninomiya K."/>
            <person name="Ishibashi T."/>
            <person name="Yamashita H."/>
            <person name="Murakawa K."/>
            <person name="Fujimori K."/>
            <person name="Tanai H."/>
            <person name="Kimata M."/>
            <person name="Watanabe M."/>
            <person name="Hiraoka S."/>
            <person name="Chiba Y."/>
            <person name="Ishida S."/>
            <person name="Ono Y."/>
            <person name="Takiguchi S."/>
            <person name="Watanabe S."/>
            <person name="Yosida M."/>
            <person name="Hotuta T."/>
            <person name="Kusano J."/>
            <person name="Kanehori K."/>
            <person name="Takahashi-Fujii A."/>
            <person name="Hara H."/>
            <person name="Tanase T.-O."/>
            <person name="Nomura Y."/>
            <person name="Togiya S."/>
            <person name="Komai F."/>
            <person name="Hara R."/>
            <person name="Takeuchi K."/>
            <person name="Arita M."/>
            <person name="Imose N."/>
            <person name="Musashino K."/>
            <person name="Yuuki H."/>
            <person name="Oshima A."/>
            <person name="Sasaki N."/>
            <person name="Aotsuka S."/>
            <person name="Yoshikawa Y."/>
            <person name="Matsunawa H."/>
            <person name="Ichihara T."/>
            <person name="Shiohata N."/>
            <person name="Sano S."/>
            <person name="Moriya S."/>
            <person name="Momiyama H."/>
            <person name="Satoh N."/>
            <person name="Takami S."/>
            <person name="Terashima Y."/>
            <person name="Suzuki O."/>
            <person name="Nakagawa S."/>
            <person name="Senoh A."/>
            <person name="Mizoguchi H."/>
            <person name="Goto Y."/>
            <person name="Shimizu F."/>
            <person name="Wakebe H."/>
            <person name="Hishigaki H."/>
            <person name="Watanabe T."/>
            <person name="Sugiyama A."/>
            <person name="Takemoto M."/>
            <person name="Kawakami B."/>
            <person name="Yamazaki M."/>
            <person name="Watanabe K."/>
            <person name="Kumagai A."/>
            <person name="Itakura S."/>
            <person name="Fukuzumi Y."/>
            <person name="Fujimori Y."/>
            <person name="Komiyama M."/>
            <person name="Tashiro H."/>
            <person name="Tanigami A."/>
            <person name="Fujiwara T."/>
            <person name="Ono T."/>
            <person name="Yamada K."/>
            <person name="Fujii Y."/>
            <person name="Ozaki K."/>
            <person name="Hirao M."/>
            <person name="Ohmori Y."/>
            <person name="Kawabata A."/>
            <person name="Hikiji T."/>
            <person name="Kobatake N."/>
            <person name="Inagaki H."/>
            <person name="Ikema Y."/>
            <person name="Okamoto S."/>
            <person name="Okitani R."/>
            <person name="Kawakami T."/>
            <person name="Noguchi S."/>
            <person name="Itoh T."/>
            <person name="Shigeta K."/>
            <person name="Senba T."/>
            <person name="Matsumura K."/>
            <person name="Nakajima Y."/>
            <person name="Mizuno T."/>
            <person name="Morinaga M."/>
            <person name="Sasaki M."/>
            <person name="Togashi T."/>
            <person name="Oyama M."/>
            <person name="Hata H."/>
            <person name="Watanabe M."/>
            <person name="Komatsu T."/>
            <person name="Mizushima-Sugano J."/>
            <person name="Satoh T."/>
            <person name="Shirai Y."/>
            <person name="Takahashi Y."/>
            <person name="Nakagawa K."/>
            <person name="Okumura K."/>
            <person name="Nagase T."/>
            <person name="Nomura N."/>
            <person name="Kikuchi H."/>
            <person name="Masuho Y."/>
            <person name="Yamashita R."/>
            <person name="Nakai K."/>
            <person name="Yada T."/>
            <person name="Nakamura Y."/>
            <person name="Ohara O."/>
            <person name="Isogai T."/>
            <person name="Sugano S."/>
        </authorList>
    </citation>
    <scope>NUCLEOTIDE SEQUENCE [LARGE SCALE MRNA] (ISOFORMS 1 AND 2)</scope>
</reference>
<reference key="2">
    <citation type="journal article" date="2004" name="Nature">
        <title>The DNA sequence and biology of human chromosome 19.</title>
        <authorList>
            <person name="Grimwood J."/>
            <person name="Gordon L.A."/>
            <person name="Olsen A.S."/>
            <person name="Terry A."/>
            <person name="Schmutz J."/>
            <person name="Lamerdin J.E."/>
            <person name="Hellsten U."/>
            <person name="Goodstein D."/>
            <person name="Couronne O."/>
            <person name="Tran-Gyamfi M."/>
            <person name="Aerts A."/>
            <person name="Altherr M."/>
            <person name="Ashworth L."/>
            <person name="Bajorek E."/>
            <person name="Black S."/>
            <person name="Branscomb E."/>
            <person name="Caenepeel S."/>
            <person name="Carrano A.V."/>
            <person name="Caoile C."/>
            <person name="Chan Y.M."/>
            <person name="Christensen M."/>
            <person name="Cleland C.A."/>
            <person name="Copeland A."/>
            <person name="Dalin E."/>
            <person name="Dehal P."/>
            <person name="Denys M."/>
            <person name="Detter J.C."/>
            <person name="Escobar J."/>
            <person name="Flowers D."/>
            <person name="Fotopulos D."/>
            <person name="Garcia C."/>
            <person name="Georgescu A.M."/>
            <person name="Glavina T."/>
            <person name="Gomez M."/>
            <person name="Gonzales E."/>
            <person name="Groza M."/>
            <person name="Hammon N."/>
            <person name="Hawkins T."/>
            <person name="Haydu L."/>
            <person name="Ho I."/>
            <person name="Huang W."/>
            <person name="Israni S."/>
            <person name="Jett J."/>
            <person name="Kadner K."/>
            <person name="Kimball H."/>
            <person name="Kobayashi A."/>
            <person name="Larionov V."/>
            <person name="Leem S.-H."/>
            <person name="Lopez F."/>
            <person name="Lou Y."/>
            <person name="Lowry S."/>
            <person name="Malfatti S."/>
            <person name="Martinez D."/>
            <person name="McCready P.M."/>
            <person name="Medina C."/>
            <person name="Morgan J."/>
            <person name="Nelson K."/>
            <person name="Nolan M."/>
            <person name="Ovcharenko I."/>
            <person name="Pitluck S."/>
            <person name="Pollard M."/>
            <person name="Popkie A.P."/>
            <person name="Predki P."/>
            <person name="Quan G."/>
            <person name="Ramirez L."/>
            <person name="Rash S."/>
            <person name="Retterer J."/>
            <person name="Rodriguez A."/>
            <person name="Rogers S."/>
            <person name="Salamov A."/>
            <person name="Salazar A."/>
            <person name="She X."/>
            <person name="Smith D."/>
            <person name="Slezak T."/>
            <person name="Solovyev V."/>
            <person name="Thayer N."/>
            <person name="Tice H."/>
            <person name="Tsai M."/>
            <person name="Ustaszewska A."/>
            <person name="Vo N."/>
            <person name="Wagner M."/>
            <person name="Wheeler J."/>
            <person name="Wu K."/>
            <person name="Xie G."/>
            <person name="Yang J."/>
            <person name="Dubchak I."/>
            <person name="Furey T.S."/>
            <person name="DeJong P."/>
            <person name="Dickson M."/>
            <person name="Gordon D."/>
            <person name="Eichler E.E."/>
            <person name="Pennacchio L.A."/>
            <person name="Richardson P."/>
            <person name="Stubbs L."/>
            <person name="Rokhsar D.S."/>
            <person name="Myers R.M."/>
            <person name="Rubin E.M."/>
            <person name="Lucas S.M."/>
        </authorList>
    </citation>
    <scope>NUCLEOTIDE SEQUENCE [LARGE SCALE GENOMIC DNA]</scope>
</reference>
<reference key="3">
    <citation type="submission" date="2005-07" db="EMBL/GenBank/DDBJ databases">
        <authorList>
            <person name="Mural R.J."/>
            <person name="Istrail S."/>
            <person name="Sutton G.G."/>
            <person name="Florea L."/>
            <person name="Halpern A.L."/>
            <person name="Mobarry C.M."/>
            <person name="Lippert R."/>
            <person name="Walenz B."/>
            <person name="Shatkay H."/>
            <person name="Dew I."/>
            <person name="Miller J.R."/>
            <person name="Flanigan M.J."/>
            <person name="Edwards N.J."/>
            <person name="Bolanos R."/>
            <person name="Fasulo D."/>
            <person name="Halldorsson B.V."/>
            <person name="Hannenhalli S."/>
            <person name="Turner R."/>
            <person name="Yooseph S."/>
            <person name="Lu F."/>
            <person name="Nusskern D.R."/>
            <person name="Shue B.C."/>
            <person name="Zheng X.H."/>
            <person name="Zhong F."/>
            <person name="Delcher A.L."/>
            <person name="Huson D.H."/>
            <person name="Kravitz S.A."/>
            <person name="Mouchard L."/>
            <person name="Reinert K."/>
            <person name="Remington K.A."/>
            <person name="Clark A.G."/>
            <person name="Waterman M.S."/>
            <person name="Eichler E.E."/>
            <person name="Adams M.D."/>
            <person name="Hunkapiller M.W."/>
            <person name="Myers E.W."/>
            <person name="Venter J.C."/>
        </authorList>
    </citation>
    <scope>NUCLEOTIDE SEQUENCE [LARGE SCALE GENOMIC DNA]</scope>
</reference>
<reference key="4">
    <citation type="journal article" date="2004" name="Genome Res.">
        <title>The status, quality, and expansion of the NIH full-length cDNA project: the Mammalian Gene Collection (MGC).</title>
        <authorList>
            <consortium name="The MGC Project Team"/>
        </authorList>
    </citation>
    <scope>NUCLEOTIDE SEQUENCE [LARGE SCALE MRNA] (ISOFORM 1)</scope>
    <source>
        <tissue>Testis</tissue>
    </source>
</reference>
<comment type="function">
    <text>May be involved in transcriptional regulation.</text>
</comment>
<comment type="interaction">
    <interactant intactId="EBI-2799529">
        <id>Q86WZ6</id>
    </interactant>
    <interactant intactId="EBI-739624">
        <id>Q8NHQ1</id>
        <label>CEP70</label>
    </interactant>
    <organismsDiffer>false</organismsDiffer>
    <experiments>7</experiments>
</comment>
<comment type="subcellular location">
    <subcellularLocation>
        <location evidence="4">Nucleus</location>
    </subcellularLocation>
</comment>
<comment type="alternative products">
    <event type="alternative splicing"/>
    <isoform>
        <id>Q86WZ6-1</id>
        <name>1</name>
        <sequence type="displayed"/>
    </isoform>
    <isoform>
        <id>Q86WZ6-2</id>
        <name>2</name>
        <sequence type="described" ref="VSP_056544"/>
    </isoform>
</comment>
<comment type="similarity">
    <text evidence="4">Belongs to the krueppel C2H2-type zinc-finger protein family.</text>
</comment>
<feature type="chain" id="PRO_0000047468" description="Zinc finger protein 227">
    <location>
        <begin position="1"/>
        <end position="799"/>
    </location>
</feature>
<feature type="domain" description="KRAB" evidence="2">
    <location>
        <begin position="23"/>
        <end position="94"/>
    </location>
</feature>
<feature type="zinc finger region" description="C2H2-type 1" evidence="1">
    <location>
        <begin position="250"/>
        <end position="272"/>
    </location>
</feature>
<feature type="zinc finger region" description="C2H2-type 2" evidence="1">
    <location>
        <begin position="269"/>
        <end position="291"/>
    </location>
</feature>
<feature type="zinc finger region" description="C2H2-type 3" evidence="1">
    <location>
        <begin position="324"/>
        <end position="346"/>
    </location>
</feature>
<feature type="zinc finger region" description="C2H2-type 4" evidence="1">
    <location>
        <begin position="352"/>
        <end position="374"/>
    </location>
</feature>
<feature type="zinc finger region" description="C2H2-type 5" evidence="1">
    <location>
        <begin position="380"/>
        <end position="402"/>
    </location>
</feature>
<feature type="zinc finger region" description="C2H2-type 6" evidence="1">
    <location>
        <begin position="408"/>
        <end position="430"/>
    </location>
</feature>
<feature type="zinc finger region" description="C2H2-type 7" evidence="1">
    <location>
        <begin position="436"/>
        <end position="458"/>
    </location>
</feature>
<feature type="zinc finger region" description="C2H2-type 8" evidence="1">
    <location>
        <begin position="464"/>
        <end position="486"/>
    </location>
</feature>
<feature type="zinc finger region" description="C2H2-type 9" evidence="1">
    <location>
        <begin position="492"/>
        <end position="514"/>
    </location>
</feature>
<feature type="zinc finger region" description="C2H2-type 10" evidence="1">
    <location>
        <begin position="520"/>
        <end position="542"/>
    </location>
</feature>
<feature type="zinc finger region" description="C2H2-type 11" evidence="1">
    <location>
        <begin position="548"/>
        <end position="570"/>
    </location>
</feature>
<feature type="zinc finger region" description="C2H2-type 12" evidence="1">
    <location>
        <begin position="576"/>
        <end position="598"/>
    </location>
</feature>
<feature type="zinc finger region" description="C2H2-type 13" evidence="1">
    <location>
        <begin position="604"/>
        <end position="626"/>
    </location>
</feature>
<feature type="zinc finger region" description="C2H2-type 14" evidence="1">
    <location>
        <begin position="632"/>
        <end position="654"/>
    </location>
</feature>
<feature type="zinc finger region" description="C2H2-type 15" evidence="1">
    <location>
        <begin position="660"/>
        <end position="682"/>
    </location>
</feature>
<feature type="zinc finger region" description="C2H2-type 16" evidence="1">
    <location>
        <begin position="688"/>
        <end position="710"/>
    </location>
</feature>
<feature type="zinc finger region" description="C2H2-type 17" evidence="1">
    <location>
        <begin position="716"/>
        <end position="738"/>
    </location>
</feature>
<feature type="zinc finger region" description="C2H2-type 18" evidence="1">
    <location>
        <begin position="744"/>
        <end position="766"/>
    </location>
</feature>
<feature type="zinc finger region" description="C2H2-type 19" evidence="1">
    <location>
        <begin position="772"/>
        <end position="794"/>
    </location>
</feature>
<feature type="splice variant" id="VSP_056544" description="In isoform 2." evidence="3">
    <location>
        <begin position="1"/>
        <end position="51"/>
    </location>
</feature>
<name>ZN227_HUMAN</name>